<gene>
    <name type="primary">Tmem17</name>
</gene>
<accession>Q5HZE5</accession>
<evidence type="ECO:0000250" key="1"/>
<evidence type="ECO:0000255" key="2"/>
<evidence type="ECO:0000305" key="3"/>
<sequence>MELPDPVRQRLSNLSLTMFGDSSRTGPESSEAADNEMVSSLPLQMSLYFNSYFFPLWWVSCIVMLHLKYSVLPDYYKFIVITVVILITLIEAIRLYLGCMGNLQEKVPELAGFWLLSLLLQLPLLLFLLLNEGLKNLPLEKAIHSIFTVFLTFQVISAFLTLKKMVNQLAARFHLQDFDQLSASSATGRRARQSSEEL</sequence>
<dbReference type="EMBL" id="BC089059">
    <property type="protein sequence ID" value="AAH89059.1"/>
    <property type="molecule type" value="mRNA"/>
</dbReference>
<dbReference type="RefSeq" id="NP_001010961.1">
    <property type="nucleotide sequence ID" value="NM_001010961.2"/>
</dbReference>
<dbReference type="RefSeq" id="XP_017454809.1">
    <property type="nucleotide sequence ID" value="XM_017599320.3"/>
</dbReference>
<dbReference type="RefSeq" id="XP_017454810.1">
    <property type="nucleotide sequence ID" value="XM_017599321.3"/>
</dbReference>
<dbReference type="RefSeq" id="XP_063129476.1">
    <property type="nucleotide sequence ID" value="XM_063273406.1"/>
</dbReference>
<dbReference type="FunCoup" id="Q5HZE5">
    <property type="interactions" value="25"/>
</dbReference>
<dbReference type="STRING" id="10116.ENSRNOP00000012224"/>
<dbReference type="GlyCosmos" id="Q5HZE5">
    <property type="glycosylation" value="1 site, No reported glycans"/>
</dbReference>
<dbReference type="GlyGen" id="Q5HZE5">
    <property type="glycosylation" value="1 site"/>
</dbReference>
<dbReference type="PhosphoSitePlus" id="Q5HZE5"/>
<dbReference type="PaxDb" id="10116-ENSRNOP00000012224"/>
<dbReference type="Ensembl" id="ENSRNOT00000012224.6">
    <property type="protein sequence ID" value="ENSRNOP00000012224.3"/>
    <property type="gene ID" value="ENSRNOG00000009220.6"/>
</dbReference>
<dbReference type="GeneID" id="360985"/>
<dbReference type="KEGG" id="rno:360985"/>
<dbReference type="UCSC" id="RGD:1310566">
    <property type="organism name" value="rat"/>
</dbReference>
<dbReference type="AGR" id="RGD:1310566"/>
<dbReference type="CTD" id="200728"/>
<dbReference type="RGD" id="1310566">
    <property type="gene designation" value="Tmem17"/>
</dbReference>
<dbReference type="eggNOG" id="KOG4694">
    <property type="taxonomic scope" value="Eukaryota"/>
</dbReference>
<dbReference type="GeneTree" id="ENSGT00940000153899"/>
<dbReference type="HOGENOM" id="CLU_092836_0_0_1"/>
<dbReference type="InParanoid" id="Q5HZE5"/>
<dbReference type="OMA" id="LWWVSCI"/>
<dbReference type="OrthoDB" id="311720at2759"/>
<dbReference type="PhylomeDB" id="Q5HZE5"/>
<dbReference type="TreeFam" id="TF323824"/>
<dbReference type="PRO" id="PR:Q5HZE5"/>
<dbReference type="Proteomes" id="UP000002494">
    <property type="component" value="Chromosome 14"/>
</dbReference>
<dbReference type="Bgee" id="ENSRNOG00000009220">
    <property type="expression patterns" value="Expressed in skeletal muscle tissue and 20 other cell types or tissues"/>
</dbReference>
<dbReference type="GO" id="GO:0060170">
    <property type="term" value="C:ciliary membrane"/>
    <property type="evidence" value="ECO:0000250"/>
    <property type="project" value="UniProtKB"/>
</dbReference>
<dbReference type="GO" id="GO:0035869">
    <property type="term" value="C:ciliary transition zone"/>
    <property type="evidence" value="ECO:0000250"/>
    <property type="project" value="UniProtKB"/>
</dbReference>
<dbReference type="GO" id="GO:0016020">
    <property type="term" value="C:membrane"/>
    <property type="evidence" value="ECO:0000266"/>
    <property type="project" value="RGD"/>
</dbReference>
<dbReference type="GO" id="GO:0036038">
    <property type="term" value="C:MKS complex"/>
    <property type="evidence" value="ECO:0000250"/>
    <property type="project" value="UniProtKB"/>
</dbReference>
<dbReference type="GO" id="GO:0060271">
    <property type="term" value="P:cilium assembly"/>
    <property type="evidence" value="ECO:0000250"/>
    <property type="project" value="UniProtKB"/>
</dbReference>
<dbReference type="GO" id="GO:1905515">
    <property type="term" value="P:non-motile cilium assembly"/>
    <property type="evidence" value="ECO:0000266"/>
    <property type="project" value="RGD"/>
</dbReference>
<dbReference type="GO" id="GO:0007224">
    <property type="term" value="P:smoothened signaling pathway"/>
    <property type="evidence" value="ECO:0000250"/>
    <property type="project" value="UniProtKB"/>
</dbReference>
<dbReference type="InterPro" id="IPR019184">
    <property type="entry name" value="Uncharacterised_TM-17"/>
</dbReference>
<dbReference type="PANTHER" id="PTHR13531">
    <property type="entry name" value="GEO07735P1-RELATED-RELATED"/>
    <property type="match status" value="1"/>
</dbReference>
<dbReference type="PANTHER" id="PTHR13531:SF14">
    <property type="entry name" value="TRANSMEMBRANE PROTEIN 17"/>
    <property type="match status" value="1"/>
</dbReference>
<dbReference type="Pfam" id="PF09799">
    <property type="entry name" value="Transmemb_17"/>
    <property type="match status" value="1"/>
</dbReference>
<keyword id="KW-1003">Cell membrane</keyword>
<keyword id="KW-0966">Cell projection</keyword>
<keyword id="KW-0969">Cilium</keyword>
<keyword id="KW-0970">Cilium biogenesis/degradation</keyword>
<keyword id="KW-0325">Glycoprotein</keyword>
<keyword id="KW-0472">Membrane</keyword>
<keyword id="KW-1185">Reference proteome</keyword>
<keyword id="KW-0812">Transmembrane</keyword>
<keyword id="KW-1133">Transmembrane helix</keyword>
<reference key="1">
    <citation type="journal article" date="2004" name="Genome Res.">
        <title>The status, quality, and expansion of the NIH full-length cDNA project: the Mammalian Gene Collection (MGC).</title>
        <authorList>
            <consortium name="The MGC Project Team"/>
        </authorList>
    </citation>
    <scope>NUCLEOTIDE SEQUENCE [LARGE SCALE MRNA]</scope>
    <source>
        <tissue>Brain</tissue>
    </source>
</reference>
<proteinExistence type="evidence at transcript level"/>
<name>TMM17_RAT</name>
<organism>
    <name type="scientific">Rattus norvegicus</name>
    <name type="common">Rat</name>
    <dbReference type="NCBI Taxonomy" id="10116"/>
    <lineage>
        <taxon>Eukaryota</taxon>
        <taxon>Metazoa</taxon>
        <taxon>Chordata</taxon>
        <taxon>Craniata</taxon>
        <taxon>Vertebrata</taxon>
        <taxon>Euteleostomi</taxon>
        <taxon>Mammalia</taxon>
        <taxon>Eutheria</taxon>
        <taxon>Euarchontoglires</taxon>
        <taxon>Glires</taxon>
        <taxon>Rodentia</taxon>
        <taxon>Myomorpha</taxon>
        <taxon>Muroidea</taxon>
        <taxon>Muridae</taxon>
        <taxon>Murinae</taxon>
        <taxon>Rattus</taxon>
    </lineage>
</organism>
<protein>
    <recommendedName>
        <fullName>Transmembrane protein 17</fullName>
    </recommendedName>
</protein>
<feature type="chain" id="PRO_0000255262" description="Transmembrane protein 17">
    <location>
        <begin position="1"/>
        <end position="198"/>
    </location>
</feature>
<feature type="transmembrane region" description="Helical" evidence="2">
    <location>
        <begin position="47"/>
        <end position="67"/>
    </location>
</feature>
<feature type="transmembrane region" description="Helical" evidence="2">
    <location>
        <begin position="78"/>
        <end position="98"/>
    </location>
</feature>
<feature type="transmembrane region" description="Helical" evidence="2">
    <location>
        <begin position="110"/>
        <end position="130"/>
    </location>
</feature>
<feature type="transmembrane region" description="Helical" evidence="2">
    <location>
        <begin position="142"/>
        <end position="162"/>
    </location>
</feature>
<feature type="glycosylation site" description="N-linked (GlcNAc...) asparagine" evidence="2">
    <location>
        <position position="13"/>
    </location>
</feature>
<comment type="function">
    <text evidence="1">Transmembrane component of the tectonic-like complex, a complex localized at the transition zone of primary cilia and acting as a barrier that prevents diffusion of transmembrane proteins between the cilia and plasma membranes. Required for ciliogenesis and sonic hedgehog/SHH signaling (By similarity).</text>
</comment>
<comment type="subunit">
    <text evidence="1">Part of the tectonic-like complex (also named B9 complex).</text>
</comment>
<comment type="subcellular location">
    <subcellularLocation>
        <location evidence="1">Cell projection</location>
        <location evidence="1">Cilium membrane</location>
        <topology evidence="1">Multi-pass membrane protein</topology>
    </subcellularLocation>
    <text evidence="1">Localizes to the transition zone of primary cilia.</text>
</comment>
<comment type="similarity">
    <text evidence="3">Belongs to the TMEM17 family.</text>
</comment>